<protein>
    <recommendedName>
        <fullName evidence="1">Elongation factor P</fullName>
        <shortName evidence="1">EF-P</shortName>
    </recommendedName>
</protein>
<gene>
    <name evidence="1" type="primary">efp</name>
    <name type="ordered locus">TDE_0968</name>
</gene>
<proteinExistence type="inferred from homology"/>
<feature type="chain" id="PRO_0000094359" description="Elongation factor P">
    <location>
        <begin position="1"/>
        <end position="187"/>
    </location>
</feature>
<dbReference type="EMBL" id="AE017226">
    <property type="protein sequence ID" value="AAS11459.1"/>
    <property type="molecule type" value="Genomic_DNA"/>
</dbReference>
<dbReference type="RefSeq" id="NP_971578.1">
    <property type="nucleotide sequence ID" value="NC_002967.9"/>
</dbReference>
<dbReference type="RefSeq" id="WP_002671939.1">
    <property type="nucleotide sequence ID" value="NC_002967.9"/>
</dbReference>
<dbReference type="SMR" id="Q73P31"/>
<dbReference type="STRING" id="243275.TDE_0968"/>
<dbReference type="PaxDb" id="243275-TDE_0968"/>
<dbReference type="GeneID" id="2740540"/>
<dbReference type="KEGG" id="tde:TDE_0968"/>
<dbReference type="PATRIC" id="fig|243275.7.peg.932"/>
<dbReference type="eggNOG" id="COG0231">
    <property type="taxonomic scope" value="Bacteria"/>
</dbReference>
<dbReference type="HOGENOM" id="CLU_074944_0_2_12"/>
<dbReference type="OrthoDB" id="9801844at2"/>
<dbReference type="UniPathway" id="UPA00345"/>
<dbReference type="Proteomes" id="UP000008212">
    <property type="component" value="Chromosome"/>
</dbReference>
<dbReference type="GO" id="GO:0005737">
    <property type="term" value="C:cytoplasm"/>
    <property type="evidence" value="ECO:0007669"/>
    <property type="project" value="UniProtKB-SubCell"/>
</dbReference>
<dbReference type="GO" id="GO:0003746">
    <property type="term" value="F:translation elongation factor activity"/>
    <property type="evidence" value="ECO:0007669"/>
    <property type="project" value="UniProtKB-UniRule"/>
</dbReference>
<dbReference type="GO" id="GO:0043043">
    <property type="term" value="P:peptide biosynthetic process"/>
    <property type="evidence" value="ECO:0007669"/>
    <property type="project" value="InterPro"/>
</dbReference>
<dbReference type="CDD" id="cd04470">
    <property type="entry name" value="S1_EF-P_repeat_1"/>
    <property type="match status" value="1"/>
</dbReference>
<dbReference type="CDD" id="cd05794">
    <property type="entry name" value="S1_EF-P_repeat_2"/>
    <property type="match status" value="1"/>
</dbReference>
<dbReference type="FunFam" id="2.30.30.30:FF:000003">
    <property type="entry name" value="Elongation factor P"/>
    <property type="match status" value="1"/>
</dbReference>
<dbReference type="FunFam" id="2.40.50.140:FF:000004">
    <property type="entry name" value="Elongation factor P"/>
    <property type="match status" value="1"/>
</dbReference>
<dbReference type="FunFam" id="2.40.50.140:FF:000009">
    <property type="entry name" value="Elongation factor P"/>
    <property type="match status" value="1"/>
</dbReference>
<dbReference type="Gene3D" id="2.30.30.30">
    <property type="match status" value="1"/>
</dbReference>
<dbReference type="Gene3D" id="2.40.50.140">
    <property type="entry name" value="Nucleic acid-binding proteins"/>
    <property type="match status" value="2"/>
</dbReference>
<dbReference type="HAMAP" id="MF_00141">
    <property type="entry name" value="EF_P"/>
    <property type="match status" value="1"/>
</dbReference>
<dbReference type="InterPro" id="IPR015365">
    <property type="entry name" value="Elong-fact-P_C"/>
</dbReference>
<dbReference type="InterPro" id="IPR012340">
    <property type="entry name" value="NA-bd_OB-fold"/>
</dbReference>
<dbReference type="InterPro" id="IPR014722">
    <property type="entry name" value="Rib_uL2_dom2"/>
</dbReference>
<dbReference type="InterPro" id="IPR020599">
    <property type="entry name" value="Transl_elong_fac_P/YeiP"/>
</dbReference>
<dbReference type="InterPro" id="IPR013185">
    <property type="entry name" value="Transl_elong_KOW-like"/>
</dbReference>
<dbReference type="InterPro" id="IPR001059">
    <property type="entry name" value="Transl_elong_P/YeiP_cen"/>
</dbReference>
<dbReference type="InterPro" id="IPR011768">
    <property type="entry name" value="Transl_elongation_fac_P"/>
</dbReference>
<dbReference type="InterPro" id="IPR008991">
    <property type="entry name" value="Translation_prot_SH3-like_sf"/>
</dbReference>
<dbReference type="NCBIfam" id="TIGR00038">
    <property type="entry name" value="efp"/>
    <property type="match status" value="1"/>
</dbReference>
<dbReference type="NCBIfam" id="NF001810">
    <property type="entry name" value="PRK00529.1"/>
    <property type="match status" value="1"/>
</dbReference>
<dbReference type="PANTHER" id="PTHR30053">
    <property type="entry name" value="ELONGATION FACTOR P"/>
    <property type="match status" value="1"/>
</dbReference>
<dbReference type="PANTHER" id="PTHR30053:SF12">
    <property type="entry name" value="ELONGATION FACTOR P (EF-P) FAMILY PROTEIN"/>
    <property type="match status" value="1"/>
</dbReference>
<dbReference type="Pfam" id="PF01132">
    <property type="entry name" value="EFP"/>
    <property type="match status" value="1"/>
</dbReference>
<dbReference type="Pfam" id="PF08207">
    <property type="entry name" value="EFP_N"/>
    <property type="match status" value="1"/>
</dbReference>
<dbReference type="Pfam" id="PF09285">
    <property type="entry name" value="Elong-fact-P_C"/>
    <property type="match status" value="1"/>
</dbReference>
<dbReference type="PIRSF" id="PIRSF005901">
    <property type="entry name" value="EF-P"/>
    <property type="match status" value="1"/>
</dbReference>
<dbReference type="SMART" id="SM01185">
    <property type="entry name" value="EFP"/>
    <property type="match status" value="1"/>
</dbReference>
<dbReference type="SMART" id="SM00841">
    <property type="entry name" value="Elong-fact-P_C"/>
    <property type="match status" value="1"/>
</dbReference>
<dbReference type="SUPFAM" id="SSF50249">
    <property type="entry name" value="Nucleic acid-binding proteins"/>
    <property type="match status" value="2"/>
</dbReference>
<dbReference type="SUPFAM" id="SSF50104">
    <property type="entry name" value="Translation proteins SH3-like domain"/>
    <property type="match status" value="1"/>
</dbReference>
<name>EFP_TREDE</name>
<sequence>MIRGGDIAKGTVLLNKGTPYLVVEREFVNPGKGAAFARVKMKNLRDGSVLMQTIKTADTVEDAVVDTHKCQYQYKDGDQFMFMDTESFESISVPAETIGDKEHYLREGDEYDILIWENEPIDVRIPTKMIFIVEQSENYIKGDTVSGATKPIVTETGLVVRVPLFIKQGEKILVNTETNEYQERVNS</sequence>
<reference key="1">
    <citation type="journal article" date="2004" name="Proc. Natl. Acad. Sci. U.S.A.">
        <title>Comparison of the genome of the oral pathogen Treponema denticola with other spirochete genomes.</title>
        <authorList>
            <person name="Seshadri R."/>
            <person name="Myers G.S.A."/>
            <person name="Tettelin H."/>
            <person name="Eisen J.A."/>
            <person name="Heidelberg J.F."/>
            <person name="Dodson R.J."/>
            <person name="Davidsen T.M."/>
            <person name="DeBoy R.T."/>
            <person name="Fouts D.E."/>
            <person name="Haft D.H."/>
            <person name="Selengut J."/>
            <person name="Ren Q."/>
            <person name="Brinkac L.M."/>
            <person name="Madupu R."/>
            <person name="Kolonay J.F."/>
            <person name="Durkin S.A."/>
            <person name="Daugherty S.C."/>
            <person name="Shetty J."/>
            <person name="Shvartsbeyn A."/>
            <person name="Gebregeorgis E."/>
            <person name="Geer K."/>
            <person name="Tsegaye G."/>
            <person name="Malek J.A."/>
            <person name="Ayodeji B."/>
            <person name="Shatsman S."/>
            <person name="McLeod M.P."/>
            <person name="Smajs D."/>
            <person name="Howell J.K."/>
            <person name="Pal S."/>
            <person name="Amin A."/>
            <person name="Vashisth P."/>
            <person name="McNeill T.Z."/>
            <person name="Xiang Q."/>
            <person name="Sodergren E."/>
            <person name="Baca E."/>
            <person name="Weinstock G.M."/>
            <person name="Norris S.J."/>
            <person name="Fraser C.M."/>
            <person name="Paulsen I.T."/>
        </authorList>
    </citation>
    <scope>NUCLEOTIDE SEQUENCE [LARGE SCALE GENOMIC DNA]</scope>
    <source>
        <strain>ATCC 35405 / DSM 14222 / CIP 103919 / JCM 8153 / KCTC 15104</strain>
    </source>
</reference>
<organism>
    <name type="scientific">Treponema denticola (strain ATCC 35405 / DSM 14222 / CIP 103919 / JCM 8153 / KCTC 15104)</name>
    <dbReference type="NCBI Taxonomy" id="243275"/>
    <lineage>
        <taxon>Bacteria</taxon>
        <taxon>Pseudomonadati</taxon>
        <taxon>Spirochaetota</taxon>
        <taxon>Spirochaetia</taxon>
        <taxon>Spirochaetales</taxon>
        <taxon>Treponemataceae</taxon>
        <taxon>Treponema</taxon>
    </lineage>
</organism>
<accession>Q73P31</accession>
<comment type="function">
    <text evidence="1">Involved in peptide bond synthesis. Stimulates efficient translation and peptide-bond synthesis on native or reconstituted 70S ribosomes in vitro. Probably functions indirectly by altering the affinity of the ribosome for aminoacyl-tRNA, thus increasing their reactivity as acceptors for peptidyl transferase.</text>
</comment>
<comment type="pathway">
    <text evidence="1">Protein biosynthesis; polypeptide chain elongation.</text>
</comment>
<comment type="subcellular location">
    <subcellularLocation>
        <location evidence="1">Cytoplasm</location>
    </subcellularLocation>
</comment>
<comment type="similarity">
    <text evidence="1">Belongs to the elongation factor P family.</text>
</comment>
<keyword id="KW-0963">Cytoplasm</keyword>
<keyword id="KW-0251">Elongation factor</keyword>
<keyword id="KW-0648">Protein biosynthesis</keyword>
<keyword id="KW-1185">Reference proteome</keyword>
<evidence type="ECO:0000255" key="1">
    <source>
        <dbReference type="HAMAP-Rule" id="MF_00141"/>
    </source>
</evidence>